<protein>
    <recommendedName>
        <fullName evidence="1">Transcription termination factor Rho</fullName>
        <ecNumber evidence="1">3.6.4.-</ecNumber>
    </recommendedName>
    <alternativeName>
        <fullName evidence="1">ATP-dependent helicase Rho</fullName>
    </alternativeName>
</protein>
<reference key="1">
    <citation type="journal article" date="1996" name="J. Bacteriol.">
        <title>The Rhodobacter sphaeroides 2.4.1 rho gene: expression and genetic analysis of structure and function.</title>
        <authorList>
            <person name="Gomelsky M."/>
            <person name="Kaplan S."/>
        </authorList>
    </citation>
    <scope>NUCLEOTIDE SEQUENCE [GENOMIC DNA]</scope>
</reference>
<reference key="2">
    <citation type="submission" date="2005-09" db="EMBL/GenBank/DDBJ databases">
        <title>Complete sequence of chromosome 1 of Rhodobacter sphaeroides 2.4.1.</title>
        <authorList>
            <person name="Copeland A."/>
            <person name="Lucas S."/>
            <person name="Lapidus A."/>
            <person name="Barry K."/>
            <person name="Detter J.C."/>
            <person name="Glavina T."/>
            <person name="Hammon N."/>
            <person name="Israni S."/>
            <person name="Pitluck S."/>
            <person name="Richardson P."/>
            <person name="Mackenzie C."/>
            <person name="Choudhary M."/>
            <person name="Larimer F."/>
            <person name="Hauser L.J."/>
            <person name="Land M."/>
            <person name="Donohue T.J."/>
            <person name="Kaplan S."/>
        </authorList>
    </citation>
    <scope>NUCLEOTIDE SEQUENCE [LARGE SCALE GENOMIC DNA]</scope>
    <source>
        <strain>ATCC 17023 / DSM 158 / JCM 6121 / CCUG 31486 / LMG 2827 / NBRC 12203 / NCIMB 8253 / ATH 2.4.1.</strain>
    </source>
</reference>
<organism>
    <name type="scientific">Cereibacter sphaeroides (strain ATCC 17023 / DSM 158 / JCM 6121 / CCUG 31486 / LMG 2827 / NBRC 12203 / NCIMB 8253 / ATH 2.4.1.)</name>
    <name type="common">Rhodobacter sphaeroides</name>
    <dbReference type="NCBI Taxonomy" id="272943"/>
    <lineage>
        <taxon>Bacteria</taxon>
        <taxon>Pseudomonadati</taxon>
        <taxon>Pseudomonadota</taxon>
        <taxon>Alphaproteobacteria</taxon>
        <taxon>Rhodobacterales</taxon>
        <taxon>Paracoccaceae</taxon>
        <taxon>Cereibacter</taxon>
    </lineage>
</organism>
<gene>
    <name evidence="1" type="primary">rho</name>
    <name type="ordered locus">RHOS4_28440</name>
    <name type="ORF">RSP_1231</name>
</gene>
<evidence type="ECO:0000255" key="1">
    <source>
        <dbReference type="HAMAP-Rule" id="MF_01884"/>
    </source>
</evidence>
<evidence type="ECO:0000255" key="2">
    <source>
        <dbReference type="PROSITE-ProRule" id="PRU01203"/>
    </source>
</evidence>
<comment type="function">
    <text evidence="1">Facilitates transcription termination by a mechanism that involves Rho binding to the nascent RNA, activation of Rho's RNA-dependent ATPase activity, and release of the mRNA from the DNA template.</text>
</comment>
<comment type="subunit">
    <text evidence="1">Homohexamer. The homohexamer assembles into an open ring structure.</text>
</comment>
<comment type="similarity">
    <text evidence="1">Belongs to the Rho family.</text>
</comment>
<proteinExistence type="inferred from homology"/>
<dbReference type="EC" id="3.6.4.-" evidence="1"/>
<dbReference type="EMBL" id="L76097">
    <property type="protein sequence ID" value="AAB02034.1"/>
    <property type="molecule type" value="Genomic_DNA"/>
</dbReference>
<dbReference type="EMBL" id="CP000143">
    <property type="protein sequence ID" value="ABA80412.1"/>
    <property type="molecule type" value="Genomic_DNA"/>
</dbReference>
<dbReference type="PIR" id="JC6035">
    <property type="entry name" value="JC6035"/>
</dbReference>
<dbReference type="RefSeq" id="WP_009563271.1">
    <property type="nucleotide sequence ID" value="NZ_CP030271.1"/>
</dbReference>
<dbReference type="RefSeq" id="YP_354313.1">
    <property type="nucleotide sequence ID" value="NC_007493.2"/>
</dbReference>
<dbReference type="SMR" id="P52156"/>
<dbReference type="STRING" id="272943.RSP_1231"/>
<dbReference type="EnsemblBacteria" id="ABA80412">
    <property type="protein sequence ID" value="ABA80412"/>
    <property type="gene ID" value="RSP_1231"/>
</dbReference>
<dbReference type="GeneID" id="67448003"/>
<dbReference type="KEGG" id="rsp:RSP_1231"/>
<dbReference type="PATRIC" id="fig|272943.9.peg.3212"/>
<dbReference type="eggNOG" id="COG1158">
    <property type="taxonomic scope" value="Bacteria"/>
</dbReference>
<dbReference type="OrthoDB" id="9805197at2"/>
<dbReference type="PhylomeDB" id="P52156"/>
<dbReference type="Proteomes" id="UP000002703">
    <property type="component" value="Chromosome 1"/>
</dbReference>
<dbReference type="GO" id="GO:0005829">
    <property type="term" value="C:cytosol"/>
    <property type="evidence" value="ECO:0007669"/>
    <property type="project" value="UniProtKB-ARBA"/>
</dbReference>
<dbReference type="GO" id="GO:0005524">
    <property type="term" value="F:ATP binding"/>
    <property type="evidence" value="ECO:0007669"/>
    <property type="project" value="UniProtKB-UniRule"/>
</dbReference>
<dbReference type="GO" id="GO:0016887">
    <property type="term" value="F:ATP hydrolysis activity"/>
    <property type="evidence" value="ECO:0007669"/>
    <property type="project" value="InterPro"/>
</dbReference>
<dbReference type="GO" id="GO:0008186">
    <property type="term" value="F:ATP-dependent activity, acting on RNA"/>
    <property type="evidence" value="ECO:0007669"/>
    <property type="project" value="InterPro"/>
</dbReference>
<dbReference type="GO" id="GO:0004386">
    <property type="term" value="F:helicase activity"/>
    <property type="evidence" value="ECO:0007669"/>
    <property type="project" value="UniProtKB-UniRule"/>
</dbReference>
<dbReference type="GO" id="GO:0003723">
    <property type="term" value="F:RNA binding"/>
    <property type="evidence" value="ECO:0007669"/>
    <property type="project" value="UniProtKB-UniRule"/>
</dbReference>
<dbReference type="GO" id="GO:0006353">
    <property type="term" value="P:DNA-templated transcription termination"/>
    <property type="evidence" value="ECO:0007669"/>
    <property type="project" value="UniProtKB-UniRule"/>
</dbReference>
<dbReference type="CDD" id="cd04459">
    <property type="entry name" value="Rho_CSD"/>
    <property type="match status" value="1"/>
</dbReference>
<dbReference type="CDD" id="cd01128">
    <property type="entry name" value="rho_factor_C"/>
    <property type="match status" value="1"/>
</dbReference>
<dbReference type="FunFam" id="3.40.50.300:FF:000072">
    <property type="entry name" value="Transcription termination factor Rho"/>
    <property type="match status" value="1"/>
</dbReference>
<dbReference type="Gene3D" id="1.10.720.10">
    <property type="match status" value="1"/>
</dbReference>
<dbReference type="Gene3D" id="2.40.50.140">
    <property type="entry name" value="Nucleic acid-binding proteins"/>
    <property type="match status" value="1"/>
</dbReference>
<dbReference type="Gene3D" id="3.40.50.300">
    <property type="entry name" value="P-loop containing nucleotide triphosphate hydrolases"/>
    <property type="match status" value="1"/>
</dbReference>
<dbReference type="HAMAP" id="MF_01884">
    <property type="entry name" value="Rho"/>
    <property type="match status" value="1"/>
</dbReference>
<dbReference type="InterPro" id="IPR003593">
    <property type="entry name" value="AAA+_ATPase"/>
</dbReference>
<dbReference type="InterPro" id="IPR000194">
    <property type="entry name" value="ATPase_F1/V1/A1_a/bsu_nucl-bd"/>
</dbReference>
<dbReference type="InterPro" id="IPR011129">
    <property type="entry name" value="CSD"/>
</dbReference>
<dbReference type="InterPro" id="IPR012340">
    <property type="entry name" value="NA-bd_OB-fold"/>
</dbReference>
<dbReference type="InterPro" id="IPR027417">
    <property type="entry name" value="P-loop_NTPase"/>
</dbReference>
<dbReference type="InterPro" id="IPR011112">
    <property type="entry name" value="Rho-like_N"/>
</dbReference>
<dbReference type="InterPro" id="IPR041703">
    <property type="entry name" value="Rho_factor_ATP-bd"/>
</dbReference>
<dbReference type="InterPro" id="IPR036269">
    <property type="entry name" value="Rho_N_sf"/>
</dbReference>
<dbReference type="InterPro" id="IPR011113">
    <property type="entry name" value="Rho_RNA-bd"/>
</dbReference>
<dbReference type="InterPro" id="IPR004665">
    <property type="entry name" value="Term_rho"/>
</dbReference>
<dbReference type="NCBIfam" id="NF006886">
    <property type="entry name" value="PRK09376.1"/>
    <property type="match status" value="1"/>
</dbReference>
<dbReference type="NCBIfam" id="TIGR00767">
    <property type="entry name" value="rho"/>
    <property type="match status" value="1"/>
</dbReference>
<dbReference type="PANTHER" id="PTHR46425">
    <property type="entry name" value="TRANSCRIPTION TERMINATION FACTOR RHO"/>
    <property type="match status" value="1"/>
</dbReference>
<dbReference type="PANTHER" id="PTHR46425:SF1">
    <property type="entry name" value="TRANSCRIPTION TERMINATION FACTOR RHO"/>
    <property type="match status" value="1"/>
</dbReference>
<dbReference type="Pfam" id="PF00006">
    <property type="entry name" value="ATP-synt_ab"/>
    <property type="match status" value="1"/>
</dbReference>
<dbReference type="Pfam" id="PF07498">
    <property type="entry name" value="Rho_N"/>
    <property type="match status" value="1"/>
</dbReference>
<dbReference type="Pfam" id="PF07497">
    <property type="entry name" value="Rho_RNA_bind"/>
    <property type="match status" value="1"/>
</dbReference>
<dbReference type="SMART" id="SM00382">
    <property type="entry name" value="AAA"/>
    <property type="match status" value="1"/>
</dbReference>
<dbReference type="SMART" id="SM00357">
    <property type="entry name" value="CSP"/>
    <property type="match status" value="1"/>
</dbReference>
<dbReference type="SMART" id="SM00959">
    <property type="entry name" value="Rho_N"/>
    <property type="match status" value="1"/>
</dbReference>
<dbReference type="SUPFAM" id="SSF50249">
    <property type="entry name" value="Nucleic acid-binding proteins"/>
    <property type="match status" value="1"/>
</dbReference>
<dbReference type="SUPFAM" id="SSF52540">
    <property type="entry name" value="P-loop containing nucleoside triphosphate hydrolases"/>
    <property type="match status" value="1"/>
</dbReference>
<dbReference type="SUPFAM" id="SSF68912">
    <property type="entry name" value="Rho N-terminal domain-like"/>
    <property type="match status" value="1"/>
</dbReference>
<dbReference type="PROSITE" id="PS51856">
    <property type="entry name" value="RHO_RNA_BD"/>
    <property type="match status" value="1"/>
</dbReference>
<accession>P52156</accession>
<accession>Q3IYH2</accession>
<name>RHO_CERS4</name>
<sequence>MNERLNLADLKAKTPADLLAMAEEWEIENAPSMRKGEMMFSILKEHAEEGYEVGGDGVLEVLQDGFGFLRSPEANYLPGPDDIYVSPEILRQFSLRTGDTIEGVIVAPRENERYFSLTRVTKINFDDPERARHKVHFDNLTPLYPDERLKMEVDDPTMKDRSARIIDLVAPIGKGQRGLIVAPPRTGKTVLLQNIAHSIATNHPECYLIVLLIDERPEEVTDMQRSVKGEVVSSTFDEPATRHVAVAEMVIEKAKRLVEHKRDVVILLDSITRLGRAFNTVVPSSGKVLTGGVDANALQRPKRFFGAARNIEEGGSLTIIATALIDTGSRMDEVIFEEFKGTGNSEIVLDRKVADKRVFPAMDILKSGTRKEDLLVDKSDLQKTYVLRRILNPMGTTDAIEFLISKLRQTKSNAEFFDSMNT</sequence>
<feature type="chain" id="PRO_0000188974" description="Transcription termination factor Rho">
    <location>
        <begin position="1"/>
        <end position="422"/>
    </location>
</feature>
<feature type="domain" description="Rho RNA-BD" evidence="2">
    <location>
        <begin position="52"/>
        <end position="127"/>
    </location>
</feature>
<feature type="binding site" evidence="1">
    <location>
        <begin position="173"/>
        <end position="178"/>
    </location>
    <ligand>
        <name>ATP</name>
        <dbReference type="ChEBI" id="CHEBI:30616"/>
    </ligand>
</feature>
<feature type="binding site" evidence="1">
    <location>
        <begin position="185"/>
        <end position="190"/>
    </location>
    <ligand>
        <name>ATP</name>
        <dbReference type="ChEBI" id="CHEBI:30616"/>
    </ligand>
</feature>
<feature type="binding site" evidence="1">
    <location>
        <position position="216"/>
    </location>
    <ligand>
        <name>ATP</name>
        <dbReference type="ChEBI" id="CHEBI:30616"/>
    </ligand>
</feature>
<keyword id="KW-0067">ATP-binding</keyword>
<keyword id="KW-0347">Helicase</keyword>
<keyword id="KW-0378">Hydrolase</keyword>
<keyword id="KW-0547">Nucleotide-binding</keyword>
<keyword id="KW-1185">Reference proteome</keyword>
<keyword id="KW-0694">RNA-binding</keyword>
<keyword id="KW-0804">Transcription</keyword>
<keyword id="KW-0805">Transcription regulation</keyword>
<keyword id="KW-0806">Transcription termination</keyword>